<name>YPP1_YEAS7</name>
<organism>
    <name type="scientific">Saccharomyces cerevisiae (strain YJM789)</name>
    <name type="common">Baker's yeast</name>
    <dbReference type="NCBI Taxonomy" id="307796"/>
    <lineage>
        <taxon>Eukaryota</taxon>
        <taxon>Fungi</taxon>
        <taxon>Dikarya</taxon>
        <taxon>Ascomycota</taxon>
        <taxon>Saccharomycotina</taxon>
        <taxon>Saccharomycetes</taxon>
        <taxon>Saccharomycetales</taxon>
        <taxon>Saccharomycetaceae</taxon>
        <taxon>Saccharomyces</taxon>
    </lineage>
</organism>
<keyword id="KW-1003">Cell membrane</keyword>
<keyword id="KW-0254">Endocytosis</keyword>
<keyword id="KW-0472">Membrane</keyword>
<feature type="chain" id="PRO_0000308809" description="Cargo-transport protein YPP1">
    <location>
        <begin position="1"/>
        <end position="817"/>
    </location>
</feature>
<gene>
    <name type="primary">YPP1</name>
    <name type="ORF">SCY_2091</name>
</gene>
<accession>A6ZUK8</accession>
<evidence type="ECO:0000250" key="1"/>
<evidence type="ECO:0000305" key="2"/>
<proteinExistence type="inferred from homology"/>
<sequence>MPNSNVRIPPTVPSKIIDVVDQALRARLLGGSTFNSGFDSLDSVLNLQFRLHYHVIGSNGPAKPVCDVLLKESQNLEKNMSMMEELNDYPEITKLVEKILFNCLAILFFHRGQFQESQRCLLHSLKIHNNTASQRTALMEQYDRYLIVENLYYRGLVSQDINIMQNVFYKELLAHVDTVPPESNGLLFEYISLIVAKLRFNQIQDLAENFKTTVENPFILFLYMIKKFQSPLKKHIDNDDLYLKFGQNVLLKVKFPTASETNDEALEHFNVFLQYYFKFTHIKKIKVNPSWYNFIISSMEKTFQSIEVSKTAMFLFQNLSDNSNDEIKKKTFKRESILNFVNFVKYNDKYYQLHDNSHHDIISFIDAYSFILQNSSKTDSIENVFDYDNTVSTFATSLNSFYKEYNLPLMSQSESLDWLENSTRCVYPGNISKVLTNAWSTLYEIRKCQLDFLVSNNLTSYLCNAMMLSTKEKDNADVEEQEEGEEEKALRELQFKYSYTLAQQRHIETAIKTLESLILSKNPNYYKAWHLLALCRSVQEDKEMSYKIVCSVLEAMNESLQNNTLLLNDRWQFIHLKLTQLALIEEIFGTLEALETLPEVFELYATLFPDSQPKLNSMGPKYSQTKEYLLQMVWIFAANMYMRTKDNDEDAKAAIKEASNVESKFKNLNCNIANGYLSIIKDEPGVALKEFETVLYYDENNLDALVGFAELIFPEELGVEETNLERYYTLSLDKKPGKRAKLTFVNDTDRSAAYARLKFLLECAILESIEAYYSPEVWWYLSLIYEKYQDDEYKNSLLKCIKYQELNPIRSLRYCNY</sequence>
<protein>
    <recommendedName>
        <fullName>Cargo-transport protein YPP1</fullName>
    </recommendedName>
    <alternativeName>
        <fullName>Alpha-synuclein protective protein 1</fullName>
    </alternativeName>
</protein>
<dbReference type="EMBL" id="AAFW02000100">
    <property type="protein sequence ID" value="EDN61785.1"/>
    <property type="molecule type" value="Genomic_DNA"/>
</dbReference>
<dbReference type="SMR" id="A6ZUK8"/>
<dbReference type="HOGENOM" id="CLU_019616_0_0_1"/>
<dbReference type="Proteomes" id="UP000007060">
    <property type="component" value="Unassembled WGS sequence"/>
</dbReference>
<dbReference type="GO" id="GO:0005886">
    <property type="term" value="C:plasma membrane"/>
    <property type="evidence" value="ECO:0007669"/>
    <property type="project" value="UniProtKB-SubCell"/>
</dbReference>
<dbReference type="GO" id="GO:0006897">
    <property type="term" value="P:endocytosis"/>
    <property type="evidence" value="ECO:0007669"/>
    <property type="project" value="UniProtKB-KW"/>
</dbReference>
<dbReference type="CDD" id="cd23270">
    <property type="entry name" value="YPP1"/>
    <property type="match status" value="1"/>
</dbReference>
<dbReference type="Gene3D" id="1.25.40.10">
    <property type="entry name" value="Tetratricopeptide repeat domain"/>
    <property type="match status" value="1"/>
</dbReference>
<dbReference type="InterPro" id="IPR051722">
    <property type="entry name" value="Endocytosis_PI4K-reg_protein"/>
</dbReference>
<dbReference type="InterPro" id="IPR011990">
    <property type="entry name" value="TPR-like_helical_dom_sf"/>
</dbReference>
<dbReference type="PANTHER" id="PTHR23083:SF464">
    <property type="entry name" value="TETRATRICOPEPTIDE REPEAT DOMAIN 7, ISOFORM A"/>
    <property type="match status" value="1"/>
</dbReference>
<dbReference type="PANTHER" id="PTHR23083">
    <property type="entry name" value="TETRATRICOPEPTIDE REPEAT PROTEIN, TPR"/>
    <property type="match status" value="1"/>
</dbReference>
<dbReference type="SUPFAM" id="SSF48452">
    <property type="entry name" value="TPR-like"/>
    <property type="match status" value="1"/>
</dbReference>
<reference key="1">
    <citation type="journal article" date="2007" name="Proc. Natl. Acad. Sci. U.S.A.">
        <title>Genome sequencing and comparative analysis of Saccharomyces cerevisiae strain YJM789.</title>
        <authorList>
            <person name="Wei W."/>
            <person name="McCusker J.H."/>
            <person name="Hyman R.W."/>
            <person name="Jones T."/>
            <person name="Ning Y."/>
            <person name="Cao Z."/>
            <person name="Gu Z."/>
            <person name="Bruno D."/>
            <person name="Miranda M."/>
            <person name="Nguyen M."/>
            <person name="Wilhelmy J."/>
            <person name="Komp C."/>
            <person name="Tamse R."/>
            <person name="Wang X."/>
            <person name="Jia P."/>
            <person name="Luedi P."/>
            <person name="Oefner P.J."/>
            <person name="David L."/>
            <person name="Dietrich F.S."/>
            <person name="Li Y."/>
            <person name="Davis R.W."/>
            <person name="Steinmetz L.M."/>
        </authorList>
    </citation>
    <scope>NUCLEOTIDE SEQUENCE [LARGE SCALE GENOMIC DNA]</scope>
    <source>
        <strain>YJM789</strain>
    </source>
</reference>
<comment type="function">
    <text evidence="1">Involved in endocytosis.</text>
</comment>
<comment type="subunit">
    <text evidence="1">Interacts with STT4 and ribosomes.</text>
</comment>
<comment type="subcellular location">
    <subcellularLocation>
        <location evidence="1">Cytoplasmic granule</location>
    </subcellularLocation>
    <subcellularLocation>
        <location evidence="1">Cell membrane</location>
        <topology evidence="1">Peripheral membrane protein</topology>
        <orientation evidence="1">Cytoplasmic side</orientation>
    </subcellularLocation>
</comment>
<comment type="similarity">
    <text evidence="2">Belongs to the YPP1 family.</text>
</comment>